<proteinExistence type="evidence at protein level"/>
<name>BCL9_DROME</name>
<keyword id="KW-0002">3D-structure</keyword>
<keyword id="KW-0217">Developmental protein</keyword>
<keyword id="KW-0539">Nucleus</keyword>
<keyword id="KW-0597">Phosphoprotein</keyword>
<keyword id="KW-1185">Reference proteome</keyword>
<keyword id="KW-0709">Segmentation polarity protein</keyword>
<keyword id="KW-0879">Wnt signaling pathway</keyword>
<reference key="1">
    <citation type="journal article" date="2000" name="Science">
        <title>The genome sequence of Drosophila melanogaster.</title>
        <authorList>
            <person name="Adams M.D."/>
            <person name="Celniker S.E."/>
            <person name="Holt R.A."/>
            <person name="Evans C.A."/>
            <person name="Gocayne J.D."/>
            <person name="Amanatides P.G."/>
            <person name="Scherer S.E."/>
            <person name="Li P.W."/>
            <person name="Hoskins R.A."/>
            <person name="Galle R.F."/>
            <person name="George R.A."/>
            <person name="Lewis S.E."/>
            <person name="Richards S."/>
            <person name="Ashburner M."/>
            <person name="Henderson S.N."/>
            <person name="Sutton G.G."/>
            <person name="Wortman J.R."/>
            <person name="Yandell M.D."/>
            <person name="Zhang Q."/>
            <person name="Chen L.X."/>
            <person name="Brandon R.C."/>
            <person name="Rogers Y.-H.C."/>
            <person name="Blazej R.G."/>
            <person name="Champe M."/>
            <person name="Pfeiffer B.D."/>
            <person name="Wan K.H."/>
            <person name="Doyle C."/>
            <person name="Baxter E.G."/>
            <person name="Helt G."/>
            <person name="Nelson C.R."/>
            <person name="Miklos G.L.G."/>
            <person name="Abril J.F."/>
            <person name="Agbayani A."/>
            <person name="An H.-J."/>
            <person name="Andrews-Pfannkoch C."/>
            <person name="Baldwin D."/>
            <person name="Ballew R.M."/>
            <person name="Basu A."/>
            <person name="Baxendale J."/>
            <person name="Bayraktaroglu L."/>
            <person name="Beasley E.M."/>
            <person name="Beeson K.Y."/>
            <person name="Benos P.V."/>
            <person name="Berman B.P."/>
            <person name="Bhandari D."/>
            <person name="Bolshakov S."/>
            <person name="Borkova D."/>
            <person name="Botchan M.R."/>
            <person name="Bouck J."/>
            <person name="Brokstein P."/>
            <person name="Brottier P."/>
            <person name="Burtis K.C."/>
            <person name="Busam D.A."/>
            <person name="Butler H."/>
            <person name="Cadieu E."/>
            <person name="Center A."/>
            <person name="Chandra I."/>
            <person name="Cherry J.M."/>
            <person name="Cawley S."/>
            <person name="Dahlke C."/>
            <person name="Davenport L.B."/>
            <person name="Davies P."/>
            <person name="de Pablos B."/>
            <person name="Delcher A."/>
            <person name="Deng Z."/>
            <person name="Mays A.D."/>
            <person name="Dew I."/>
            <person name="Dietz S.M."/>
            <person name="Dodson K."/>
            <person name="Doup L.E."/>
            <person name="Downes M."/>
            <person name="Dugan-Rocha S."/>
            <person name="Dunkov B.C."/>
            <person name="Dunn P."/>
            <person name="Durbin K.J."/>
            <person name="Evangelista C.C."/>
            <person name="Ferraz C."/>
            <person name="Ferriera S."/>
            <person name="Fleischmann W."/>
            <person name="Fosler C."/>
            <person name="Gabrielian A.E."/>
            <person name="Garg N.S."/>
            <person name="Gelbart W.M."/>
            <person name="Glasser K."/>
            <person name="Glodek A."/>
            <person name="Gong F."/>
            <person name="Gorrell J.H."/>
            <person name="Gu Z."/>
            <person name="Guan P."/>
            <person name="Harris M."/>
            <person name="Harris N.L."/>
            <person name="Harvey D.A."/>
            <person name="Heiman T.J."/>
            <person name="Hernandez J.R."/>
            <person name="Houck J."/>
            <person name="Hostin D."/>
            <person name="Houston K.A."/>
            <person name="Howland T.J."/>
            <person name="Wei M.-H."/>
            <person name="Ibegwam C."/>
            <person name="Jalali M."/>
            <person name="Kalush F."/>
            <person name="Karpen G.H."/>
            <person name="Ke Z."/>
            <person name="Kennison J.A."/>
            <person name="Ketchum K.A."/>
            <person name="Kimmel B.E."/>
            <person name="Kodira C.D."/>
            <person name="Kraft C.L."/>
            <person name="Kravitz S."/>
            <person name="Kulp D."/>
            <person name="Lai Z."/>
            <person name="Lasko P."/>
            <person name="Lei Y."/>
            <person name="Levitsky A.A."/>
            <person name="Li J.H."/>
            <person name="Li Z."/>
            <person name="Liang Y."/>
            <person name="Lin X."/>
            <person name="Liu X."/>
            <person name="Mattei B."/>
            <person name="McIntosh T.C."/>
            <person name="McLeod M.P."/>
            <person name="McPherson D."/>
            <person name="Merkulov G."/>
            <person name="Milshina N.V."/>
            <person name="Mobarry C."/>
            <person name="Morris J."/>
            <person name="Moshrefi A."/>
            <person name="Mount S.M."/>
            <person name="Moy M."/>
            <person name="Murphy B."/>
            <person name="Murphy L."/>
            <person name="Muzny D.M."/>
            <person name="Nelson D.L."/>
            <person name="Nelson D.R."/>
            <person name="Nelson K.A."/>
            <person name="Nixon K."/>
            <person name="Nusskern D.R."/>
            <person name="Pacleb J.M."/>
            <person name="Palazzolo M."/>
            <person name="Pittman G.S."/>
            <person name="Pan S."/>
            <person name="Pollard J."/>
            <person name="Puri V."/>
            <person name="Reese M.G."/>
            <person name="Reinert K."/>
            <person name="Remington K."/>
            <person name="Saunders R.D.C."/>
            <person name="Scheeler F."/>
            <person name="Shen H."/>
            <person name="Shue B.C."/>
            <person name="Siden-Kiamos I."/>
            <person name="Simpson M."/>
            <person name="Skupski M.P."/>
            <person name="Smith T.J."/>
            <person name="Spier E."/>
            <person name="Spradling A.C."/>
            <person name="Stapleton M."/>
            <person name="Strong R."/>
            <person name="Sun E."/>
            <person name="Svirskas R."/>
            <person name="Tector C."/>
            <person name="Turner R."/>
            <person name="Venter E."/>
            <person name="Wang A.H."/>
            <person name="Wang X."/>
            <person name="Wang Z.-Y."/>
            <person name="Wassarman D.A."/>
            <person name="Weinstock G.M."/>
            <person name="Weissenbach J."/>
            <person name="Williams S.M."/>
            <person name="Woodage T."/>
            <person name="Worley K.C."/>
            <person name="Wu D."/>
            <person name="Yang S."/>
            <person name="Yao Q.A."/>
            <person name="Ye J."/>
            <person name="Yeh R.-F."/>
            <person name="Zaveri J.S."/>
            <person name="Zhan M."/>
            <person name="Zhang G."/>
            <person name="Zhao Q."/>
            <person name="Zheng L."/>
            <person name="Zheng X.H."/>
            <person name="Zhong F.N."/>
            <person name="Zhong W."/>
            <person name="Zhou X."/>
            <person name="Zhu S.C."/>
            <person name="Zhu X."/>
            <person name="Smith H.O."/>
            <person name="Gibbs R.A."/>
            <person name="Myers E.W."/>
            <person name="Rubin G.M."/>
            <person name="Venter J.C."/>
        </authorList>
    </citation>
    <scope>NUCLEOTIDE SEQUENCE [LARGE SCALE GENOMIC DNA]</scope>
    <source>
        <strain>Berkeley</strain>
    </source>
</reference>
<reference key="2">
    <citation type="journal article" date="2002" name="Genome Biol.">
        <title>Annotation of the Drosophila melanogaster euchromatic genome: a systematic review.</title>
        <authorList>
            <person name="Misra S."/>
            <person name="Crosby M.A."/>
            <person name="Mungall C.J."/>
            <person name="Matthews B.B."/>
            <person name="Campbell K.S."/>
            <person name="Hradecky P."/>
            <person name="Huang Y."/>
            <person name="Kaminker J.S."/>
            <person name="Millburn G.H."/>
            <person name="Prochnik S.E."/>
            <person name="Smith C.D."/>
            <person name="Tupy J.L."/>
            <person name="Whitfield E.J."/>
            <person name="Bayraktaroglu L."/>
            <person name="Berman B.P."/>
            <person name="Bettencourt B.R."/>
            <person name="Celniker S.E."/>
            <person name="de Grey A.D.N.J."/>
            <person name="Drysdale R.A."/>
            <person name="Harris N.L."/>
            <person name="Richter J."/>
            <person name="Russo S."/>
            <person name="Schroeder A.J."/>
            <person name="Shu S.Q."/>
            <person name="Stapleton M."/>
            <person name="Yamada C."/>
            <person name="Ashburner M."/>
            <person name="Gelbart W.M."/>
            <person name="Rubin G.M."/>
            <person name="Lewis S.E."/>
        </authorList>
    </citation>
    <scope>GENOME REANNOTATION</scope>
    <source>
        <strain>Berkeley</strain>
    </source>
</reference>
<reference key="3">
    <citation type="journal article" date="2002" name="Genome Biol.">
        <title>A Drosophila full-length cDNA resource.</title>
        <authorList>
            <person name="Stapleton M."/>
            <person name="Carlson J.W."/>
            <person name="Brokstein P."/>
            <person name="Yu C."/>
            <person name="Champe M."/>
            <person name="George R.A."/>
            <person name="Guarin H."/>
            <person name="Kronmiller B."/>
            <person name="Pacleb J.M."/>
            <person name="Park S."/>
            <person name="Wan K.H."/>
            <person name="Rubin G.M."/>
            <person name="Celniker S.E."/>
        </authorList>
    </citation>
    <scope>NUCLEOTIDE SEQUENCE [LARGE SCALE MRNA]</scope>
    <source>
        <strain>Berkeley</strain>
        <tissue>Embryo</tissue>
    </source>
</reference>
<reference key="4">
    <citation type="journal article" date="2002" name="Cell">
        <title>Wnt/wingless signaling requires BCL9/legless-mediated recruitment of pygopus to the nuclear beta-catenin-TCF complex.</title>
        <authorList>
            <person name="Kramps T."/>
            <person name="Peter O."/>
            <person name="Brunner E."/>
            <person name="Nellen D."/>
            <person name="Froesch B."/>
            <person name="Chatterjee S."/>
            <person name="Murone M."/>
            <person name="Zuellig S."/>
            <person name="Basler K."/>
        </authorList>
    </citation>
    <scope>NUCLEOTIDE SEQUENCE [MRNA] OF 6-1469</scope>
    <scope>MUTAGENESIS OF GLY-514; LEU-534 AND ILE-537</scope>
</reference>
<reference key="5">
    <citation type="journal article" date="2008" name="J. Proteome Res.">
        <title>Phosphoproteome analysis of Drosophila melanogaster embryos.</title>
        <authorList>
            <person name="Zhai B."/>
            <person name="Villen J."/>
            <person name="Beausoleil S.A."/>
            <person name="Mintseris J."/>
            <person name="Gygi S.P."/>
        </authorList>
    </citation>
    <scope>PHOSPHORYLATION [LARGE SCALE ANALYSIS] AT SER-9; THR-11; SER-206; THR-208; SER-210; SER-883; SER-905 AND SER-911</scope>
    <scope>IDENTIFICATION BY MASS SPECTROMETRY</scope>
    <source>
        <tissue>Embryo</tissue>
    </source>
</reference>
<organism>
    <name type="scientific">Drosophila melanogaster</name>
    <name type="common">Fruit fly</name>
    <dbReference type="NCBI Taxonomy" id="7227"/>
    <lineage>
        <taxon>Eukaryota</taxon>
        <taxon>Metazoa</taxon>
        <taxon>Ecdysozoa</taxon>
        <taxon>Arthropoda</taxon>
        <taxon>Hexapoda</taxon>
        <taxon>Insecta</taxon>
        <taxon>Pterygota</taxon>
        <taxon>Neoptera</taxon>
        <taxon>Endopterygota</taxon>
        <taxon>Diptera</taxon>
        <taxon>Brachycera</taxon>
        <taxon>Muscomorpha</taxon>
        <taxon>Ephydroidea</taxon>
        <taxon>Drosophilidae</taxon>
        <taxon>Drosophila</taxon>
        <taxon>Sophophora</taxon>
    </lineage>
</organism>
<sequence>MLSTTMPRSPTQQQPQPNSDASSTSASGSNPGAAIGNGDSAASRSSPKTLNSEPFSTLSPDQIKLTPEEGTEKSGLSTSDKAATGGAPGSGNNLPEGQTMLRQNSTSTINSCLVASPQNSSEHSNSSNVSATVGLTQMVDCDEQSKKNKCSVKDEEAEISSNKAKGQAAGGGCETGSTSSLTVKEEPTDVLGSLVNMKKEERENHSPTMSPVGFGSIGNAQDNSATPVKIERISNDSTTEKKGSSLTMNNDEMSMEGCNQLNPDFINESLNNPAISSILVSGVGPIPGIGVGAGTGNLLTANANGISSGSSNCLDYMQQQNHIFVFSTQLANKGAESVLSGQFQTIIAYHCTQPATKSFLEDFFMKNPLKINKLQRHNSVGMPWIGMGQVGLTPPNPVAKITQQQPHTKTVGLLKPQFNQHENSKRSTVSAPSNSFVDQSDPMGNETELMCWEGGSSNTSRSGQNSRNHVDSISTSSESQAIKILEAAGVDLGQVTKGSDPGLTTENNIVSLQGVKVPDENLTPQQRQHREEQLAKIKKMNQFLFPENENSVGANVSSQITKIPGDLMMGMSGGGGGSIINPTMRQLHMPGNAKSELLSATSSGLSEDVMHPGDVISDMGAVIGCNNNQKTSVQCGSGVGVVTGTTAAGVNVNMHCSSSGAPNGNMMGSSTDMLASFGNTSCNVIGTAPDMSKEVLNQDSRTHSHQGGVAQMEWSKIQHQFFEERLKGGKPRQVTGTVVPQQQTPSGSGGNSLNNQVRPLQGPPPPYHSIQRSASVPIATQSPNPSSPNNLSLPSPRTTAAVMGLPTNSPSMDGTGSLSGSVPQANTSTVQAGTTTVLSANKNCFQADTPSPSNQNRSRNTGSSSVLTHNLSSNPSTPLSHLSPKEFESFGQSSAGDNMKSRRPSPQGQRSPVNSLIEANKDVRFAASSPGFNPHPHMQSNSNSALNAYKMGSTNIQMERQASAQGGSVQFSRRSDNIPLNPNSGNRPPPNKMTQNFDPISSLAQMSQQLTSCVSSMGSPAGTGGMTMMGGPGPSDINIEHGIISGLDGSGIDTINQNNCHSMNVVMNSMGPRMLNPKMCVAGGPNGPPGFNPNSPNGGLRENSIGSGCGSANSSNFQGVVPPGARMMGRMPVNFGSNFNPNIQVKASTPNTIQYMPVRAQNANNNNNNGANNVRMPPSLEFLQRYANPQMGAVGNGSPICPPSASDGTPGMPGLMAGPGAGGMLMNSSGEQHQNKITNNPGASNGINFFQNCNQMSIVDEEGGLPGHDGSMNIGQPSMIRGMRPHAMRPNVMGARMPPVNRQIQFAQSSDGIDCVGDPSSFFTNASCNSAGPHMFGSAQQANQPKTQHIKNIPSGMCQNQSGLAVAQGQIQLHGQGHAQGQSLIGPTNNNLMSTAGSVSATNGVSGINFVGPSSTDLKYAQQYHSFQQQLYATNTRSQQQQHMHQQHQSNMITMPPNLSPNPTFFVNK</sequence>
<feature type="chain" id="PRO_0000064884" description="Protein BCL9 homolog">
    <location>
        <begin position="1"/>
        <end position="1469"/>
    </location>
</feature>
<feature type="region of interest" description="Disordered" evidence="1">
    <location>
        <begin position="1"/>
        <end position="131"/>
    </location>
</feature>
<feature type="region of interest" description="Disordered" evidence="1">
    <location>
        <begin position="161"/>
        <end position="187"/>
    </location>
</feature>
<feature type="region of interest" description="Disordered" evidence="1">
    <location>
        <begin position="200"/>
        <end position="222"/>
    </location>
</feature>
<feature type="region of interest" description="Disordered" evidence="1">
    <location>
        <begin position="422"/>
        <end position="442"/>
    </location>
</feature>
<feature type="region of interest" description="Disordered" evidence="1">
    <location>
        <begin position="454"/>
        <end position="474"/>
    </location>
</feature>
<feature type="region of interest" description="ARM-binding">
    <location>
        <begin position="511"/>
        <end position="555"/>
    </location>
</feature>
<feature type="region of interest" description="Disordered" evidence="1">
    <location>
        <begin position="728"/>
        <end position="830"/>
    </location>
</feature>
<feature type="region of interest" description="Disordered" evidence="1">
    <location>
        <begin position="844"/>
        <end position="913"/>
    </location>
</feature>
<feature type="region of interest" description="Disordered" evidence="1">
    <location>
        <begin position="961"/>
        <end position="991"/>
    </location>
</feature>
<feature type="compositionally biased region" description="Polar residues" evidence="1">
    <location>
        <begin position="1"/>
        <end position="16"/>
    </location>
</feature>
<feature type="compositionally biased region" description="Low complexity" evidence="1">
    <location>
        <begin position="17"/>
        <end position="34"/>
    </location>
</feature>
<feature type="compositionally biased region" description="Polar residues" evidence="1">
    <location>
        <begin position="40"/>
        <end position="60"/>
    </location>
</feature>
<feature type="compositionally biased region" description="Polar residues" evidence="1">
    <location>
        <begin position="90"/>
        <end position="113"/>
    </location>
</feature>
<feature type="compositionally biased region" description="Low complexity" evidence="1">
    <location>
        <begin position="116"/>
        <end position="130"/>
    </location>
</feature>
<feature type="compositionally biased region" description="Polar residues" evidence="1">
    <location>
        <begin position="422"/>
        <end position="438"/>
    </location>
</feature>
<feature type="compositionally biased region" description="Polar residues" evidence="1">
    <location>
        <begin position="455"/>
        <end position="474"/>
    </location>
</feature>
<feature type="compositionally biased region" description="Low complexity" evidence="1">
    <location>
        <begin position="731"/>
        <end position="745"/>
    </location>
</feature>
<feature type="compositionally biased region" description="Polar residues" evidence="1">
    <location>
        <begin position="770"/>
        <end position="781"/>
    </location>
</feature>
<feature type="compositionally biased region" description="Low complexity" evidence="1">
    <location>
        <begin position="782"/>
        <end position="796"/>
    </location>
</feature>
<feature type="compositionally biased region" description="Polar residues" evidence="1">
    <location>
        <begin position="806"/>
        <end position="830"/>
    </location>
</feature>
<feature type="compositionally biased region" description="Polar residues" evidence="1">
    <location>
        <begin position="844"/>
        <end position="880"/>
    </location>
</feature>
<feature type="compositionally biased region" description="Polar residues" evidence="1">
    <location>
        <begin position="904"/>
        <end position="913"/>
    </location>
</feature>
<feature type="modified residue" description="Phosphoserine" evidence="3">
    <location>
        <position position="9"/>
    </location>
</feature>
<feature type="modified residue" description="Phosphothreonine" evidence="3">
    <location>
        <position position="11"/>
    </location>
</feature>
<feature type="modified residue" description="Phosphoserine" evidence="3">
    <location>
        <position position="206"/>
    </location>
</feature>
<feature type="modified residue" description="Phosphothreonine" evidence="3">
    <location>
        <position position="208"/>
    </location>
</feature>
<feature type="modified residue" description="Phosphoserine" evidence="3">
    <location>
        <position position="210"/>
    </location>
</feature>
<feature type="modified residue" description="Phosphoserine" evidence="3">
    <location>
        <position position="883"/>
    </location>
</feature>
<feature type="modified residue" description="Phosphoserine" evidence="3">
    <location>
        <position position="905"/>
    </location>
</feature>
<feature type="modified residue" description="Phosphoserine" evidence="3">
    <location>
        <position position="911"/>
    </location>
</feature>
<feature type="mutagenesis site" description="In allele lgs-21L." evidence="2">
    <original>G</original>
    <variation>E</variation>
    <location>
        <position position="514"/>
    </location>
</feature>
<feature type="mutagenesis site" description="In allele lgs-17E; segment polarity phenotype." evidence="2">
    <original>L</original>
    <variation>F</variation>
    <location>
        <position position="534"/>
    </location>
</feature>
<feature type="mutagenesis site" description="In allele lgs-17P." evidence="2">
    <original>I</original>
    <variation>K</variation>
    <location>
        <position position="537"/>
    </location>
</feature>
<feature type="strand" evidence="5">
    <location>
        <begin position="324"/>
        <end position="327"/>
    </location>
</feature>
<feature type="helix" evidence="5">
    <location>
        <begin position="328"/>
        <end position="339"/>
    </location>
</feature>
<feature type="helix" evidence="5">
    <location>
        <begin position="346"/>
        <end position="351"/>
    </location>
</feature>
<protein>
    <recommendedName>
        <fullName>Protein BCL9 homolog</fullName>
    </recommendedName>
    <alternativeName>
        <fullName>Protein legless</fullName>
    </alternativeName>
</protein>
<dbReference type="EMBL" id="AE014135">
    <property type="protein sequence ID" value="AAF59345.2"/>
    <property type="molecule type" value="Genomic_DNA"/>
</dbReference>
<dbReference type="EMBL" id="AY051651">
    <property type="protein sequence ID" value="AAK93075.1"/>
    <property type="molecule type" value="mRNA"/>
</dbReference>
<dbReference type="EMBL" id="AF457205">
    <property type="protein sequence ID" value="AAL91368.1"/>
    <property type="molecule type" value="mRNA"/>
</dbReference>
<dbReference type="RefSeq" id="NP_651922.1">
    <property type="nucleotide sequence ID" value="NM_143665.4"/>
</dbReference>
<dbReference type="PDB" id="3ZPV">
    <property type="method" value="X-ray"/>
    <property type="resolution" value="2.68 A"/>
    <property type="chains" value="0/2/4/6/8/B/D/F/H/J/L/N/P/R/T/V/X/Z=321-353"/>
</dbReference>
<dbReference type="PDBsum" id="3ZPV"/>
<dbReference type="SMR" id="Q961D9"/>
<dbReference type="BioGRID" id="68624">
    <property type="interactions" value="12"/>
</dbReference>
<dbReference type="ComplexPortal" id="CPX-2563">
    <property type="entry name" value="Wnt enhanceosome complex"/>
</dbReference>
<dbReference type="DIP" id="DIP-33392N"/>
<dbReference type="FunCoup" id="Q961D9">
    <property type="interactions" value="280"/>
</dbReference>
<dbReference type="IntAct" id="Q961D9">
    <property type="interactions" value="9"/>
</dbReference>
<dbReference type="MINT" id="Q961D9"/>
<dbReference type="STRING" id="7227.FBpp0088180"/>
<dbReference type="GlyGen" id="Q961D9">
    <property type="glycosylation" value="1 site"/>
</dbReference>
<dbReference type="iPTMnet" id="Q961D9"/>
<dbReference type="PaxDb" id="7227-FBpp0088180"/>
<dbReference type="EnsemblMetazoa" id="FBtr0089111">
    <property type="protein sequence ID" value="FBpp0088180"/>
    <property type="gene ID" value="FBgn0039907"/>
</dbReference>
<dbReference type="GeneID" id="43791"/>
<dbReference type="KEGG" id="dme:Dmel_CG2041"/>
<dbReference type="UCSC" id="CG2041-RA">
    <property type="organism name" value="d. melanogaster"/>
</dbReference>
<dbReference type="AGR" id="FB:FBgn0039907"/>
<dbReference type="CTD" id="43791"/>
<dbReference type="FlyBase" id="FBgn0039907">
    <property type="gene designation" value="lgs"/>
</dbReference>
<dbReference type="VEuPathDB" id="VectorBase:FBgn0039907"/>
<dbReference type="eggNOG" id="ENOG502QYJW">
    <property type="taxonomic scope" value="Eukaryota"/>
</dbReference>
<dbReference type="HOGENOM" id="CLU_251426_0_0_1"/>
<dbReference type="InParanoid" id="Q961D9"/>
<dbReference type="OMA" id="SANKNCF"/>
<dbReference type="OrthoDB" id="7668649at2759"/>
<dbReference type="PhylomeDB" id="Q961D9"/>
<dbReference type="Reactome" id="R-DME-201722">
    <property type="pathway name" value="Formation of the beta-catenin:TCF transactivating complex"/>
</dbReference>
<dbReference type="Reactome" id="R-DME-209407">
    <property type="pathway name" value="Transport of ARM to the nucleus"/>
</dbReference>
<dbReference type="Reactome" id="R-DME-209421">
    <property type="pathway name" value="Transcription activation by ARM"/>
</dbReference>
<dbReference type="SignaLink" id="Q961D9"/>
<dbReference type="BioGRID-ORCS" id="43791">
    <property type="hits" value="0 hits in 1 CRISPR screen"/>
</dbReference>
<dbReference type="ChiTaRS" id="lgs">
    <property type="organism name" value="fly"/>
</dbReference>
<dbReference type="EvolutionaryTrace" id="Q961D9"/>
<dbReference type="GenomeRNAi" id="43791"/>
<dbReference type="PRO" id="PR:Q961D9"/>
<dbReference type="Proteomes" id="UP000000803">
    <property type="component" value="Chromosome 4"/>
</dbReference>
<dbReference type="Bgee" id="FBgn0039907">
    <property type="expression patterns" value="Expressed in spermatogonium in testis and 274 other cell types or tissues"/>
</dbReference>
<dbReference type="ExpressionAtlas" id="Q961D9">
    <property type="expression patterns" value="baseline and differential"/>
</dbReference>
<dbReference type="GO" id="GO:1990907">
    <property type="term" value="C:beta-catenin-TCF complex"/>
    <property type="evidence" value="ECO:0000314"/>
    <property type="project" value="FlyBase"/>
</dbReference>
<dbReference type="GO" id="GO:0005829">
    <property type="term" value="C:cytosol"/>
    <property type="evidence" value="ECO:0000304"/>
    <property type="project" value="Reactome"/>
</dbReference>
<dbReference type="GO" id="GO:0005654">
    <property type="term" value="C:nucleoplasm"/>
    <property type="evidence" value="ECO:0000304"/>
    <property type="project" value="Reactome"/>
</dbReference>
<dbReference type="GO" id="GO:0005634">
    <property type="term" value="C:nucleus"/>
    <property type="evidence" value="ECO:0000314"/>
    <property type="project" value="UniProtKB"/>
</dbReference>
<dbReference type="GO" id="GO:0003713">
    <property type="term" value="F:transcription coactivator activity"/>
    <property type="evidence" value="ECO:0000316"/>
    <property type="project" value="FlyBase"/>
</dbReference>
<dbReference type="GO" id="GO:0060070">
    <property type="term" value="P:canonical Wnt signaling pathway"/>
    <property type="evidence" value="ECO:0000315"/>
    <property type="project" value="FlyBase"/>
</dbReference>
<dbReference type="GO" id="GO:0035293">
    <property type="term" value="P:chitin-based larval cuticle pattern formation"/>
    <property type="evidence" value="ECO:0000315"/>
    <property type="project" value="FlyBase"/>
</dbReference>
<dbReference type="GO" id="GO:0008587">
    <property type="term" value="P:imaginal disc-derived wing margin morphogenesis"/>
    <property type="evidence" value="ECO:0000315"/>
    <property type="project" value="FlyBase"/>
</dbReference>
<dbReference type="GO" id="GO:0035223">
    <property type="term" value="P:leg disc pattern formation"/>
    <property type="evidence" value="ECO:0000315"/>
    <property type="project" value="FlyBase"/>
</dbReference>
<dbReference type="GO" id="GO:0045944">
    <property type="term" value="P:positive regulation of transcription by RNA polymerase II"/>
    <property type="evidence" value="ECO:0000316"/>
    <property type="project" value="FlyBase"/>
</dbReference>
<dbReference type="GO" id="GO:0006357">
    <property type="term" value="P:regulation of transcription by RNA polymerase II"/>
    <property type="evidence" value="ECO:0000353"/>
    <property type="project" value="UniProtKB"/>
</dbReference>
<dbReference type="GO" id="GO:0007367">
    <property type="term" value="P:segment polarity determination"/>
    <property type="evidence" value="ECO:0000315"/>
    <property type="project" value="UniProtKB"/>
</dbReference>
<dbReference type="GO" id="GO:0007491">
    <property type="term" value="P:sternite morphogenesis"/>
    <property type="evidence" value="ECO:0000315"/>
    <property type="project" value="FlyBase"/>
</dbReference>
<dbReference type="InterPro" id="IPR024670">
    <property type="entry name" value="BCL9_beta-catenin-bd_dom"/>
</dbReference>
<dbReference type="InterPro" id="IPR052475">
    <property type="entry name" value="Wnt_Signal_Transd_Protein"/>
</dbReference>
<dbReference type="PANTHER" id="PTHR23194:SF17">
    <property type="entry name" value="PROTEIN BCL9 HOMOLOG"/>
    <property type="match status" value="1"/>
</dbReference>
<dbReference type="PANTHER" id="PTHR23194">
    <property type="entry name" value="PYGOPUS"/>
    <property type="match status" value="1"/>
</dbReference>
<dbReference type="Pfam" id="PF11502">
    <property type="entry name" value="BCL9"/>
    <property type="match status" value="1"/>
</dbReference>
<comment type="function">
    <text>Involved in signal transduction through the Wnt pathway.</text>
</comment>
<comment type="subunit">
    <text>Binds to ARM and PYGO.</text>
</comment>
<comment type="interaction">
    <interactant intactId="EBI-85519">
        <id>Q961D9</id>
    </interactant>
    <interactant intactId="EBI-216128">
        <id>P18824</id>
        <label>arm</label>
    </interactant>
    <organismsDiffer>false</organismsDiffer>
    <experiments>5</experiments>
</comment>
<comment type="interaction">
    <interactant intactId="EBI-85519">
        <id>Q961D9</id>
    </interactant>
    <interactant intactId="EBI-152653">
        <id>Q9V9W8</id>
        <label>pygo</label>
    </interactant>
    <organismsDiffer>false</organismsDiffer>
    <experiments>4</experiments>
</comment>
<comment type="subcellular location">
    <subcellularLocation>
        <location>Nucleus</location>
    </subcellularLocation>
</comment>
<comment type="developmental stage">
    <text>Expressed both maternally and zygotically throughout development.</text>
</comment>
<comment type="similarity">
    <text evidence="4">Belongs to the BCL9 family.</text>
</comment>
<gene>
    <name type="primary">lgs</name>
    <name type="synonym">BCL9</name>
    <name type="ORF">CG2041</name>
</gene>
<accession>Q961D9</accession>
<accession>Q9V4D2</accession>
<evidence type="ECO:0000256" key="1">
    <source>
        <dbReference type="SAM" id="MobiDB-lite"/>
    </source>
</evidence>
<evidence type="ECO:0000269" key="2">
    <source>
    </source>
</evidence>
<evidence type="ECO:0000269" key="3">
    <source>
    </source>
</evidence>
<evidence type="ECO:0000305" key="4"/>
<evidence type="ECO:0007829" key="5">
    <source>
        <dbReference type="PDB" id="3ZPV"/>
    </source>
</evidence>